<name>GL8D2_BOVIN</name>
<dbReference type="EC" id="2.4.1.-"/>
<dbReference type="EMBL" id="BC113242">
    <property type="protein sequence ID" value="AAI13243.1"/>
    <property type="molecule type" value="mRNA"/>
</dbReference>
<dbReference type="RefSeq" id="NP_001039731.1">
    <property type="nucleotide sequence ID" value="NM_001046266.1"/>
</dbReference>
<dbReference type="RefSeq" id="XP_015326589.1">
    <property type="nucleotide sequence ID" value="XM_015471103.1"/>
</dbReference>
<dbReference type="SMR" id="Q2HJ96"/>
<dbReference type="FunCoup" id="Q2HJ96">
    <property type="interactions" value="169"/>
</dbReference>
<dbReference type="STRING" id="9913.ENSBTAP00000063071"/>
<dbReference type="CAZy" id="GT8">
    <property type="family name" value="Glycosyltransferase Family 8"/>
</dbReference>
<dbReference type="GlyCosmos" id="Q2HJ96">
    <property type="glycosylation" value="1 site, No reported glycans"/>
</dbReference>
<dbReference type="GlyGen" id="Q2HJ96">
    <property type="glycosylation" value="1 site"/>
</dbReference>
<dbReference type="PaxDb" id="9913-ENSBTAP00000001224"/>
<dbReference type="Ensembl" id="ENSBTAT00000001224.5">
    <property type="protein sequence ID" value="ENSBTAP00000001224.3"/>
    <property type="gene ID" value="ENSBTAG00000000925.7"/>
</dbReference>
<dbReference type="GeneID" id="523294"/>
<dbReference type="KEGG" id="bta:523294"/>
<dbReference type="CTD" id="83468"/>
<dbReference type="VEuPathDB" id="HostDB:ENSBTAG00000000925"/>
<dbReference type="VGNC" id="VGNC:29424">
    <property type="gene designation" value="GLT8D2"/>
</dbReference>
<dbReference type="eggNOG" id="ENOG502QTN8">
    <property type="taxonomic scope" value="Eukaryota"/>
</dbReference>
<dbReference type="GeneTree" id="ENSGT00940000158078"/>
<dbReference type="HOGENOM" id="CLU_010770_0_0_1"/>
<dbReference type="InParanoid" id="Q2HJ96"/>
<dbReference type="OMA" id="STINPMW"/>
<dbReference type="OrthoDB" id="411524at2759"/>
<dbReference type="TreeFam" id="TF332433"/>
<dbReference type="Proteomes" id="UP000009136">
    <property type="component" value="Chromosome 5"/>
</dbReference>
<dbReference type="Bgee" id="ENSBTAG00000000925">
    <property type="expression patterns" value="Expressed in trachea and 102 other cell types or tissues"/>
</dbReference>
<dbReference type="GO" id="GO:0005794">
    <property type="term" value="C:Golgi apparatus"/>
    <property type="evidence" value="ECO:0000318"/>
    <property type="project" value="GO_Central"/>
</dbReference>
<dbReference type="GO" id="GO:0016020">
    <property type="term" value="C:membrane"/>
    <property type="evidence" value="ECO:0007669"/>
    <property type="project" value="UniProtKB-SubCell"/>
</dbReference>
<dbReference type="GO" id="GO:0008194">
    <property type="term" value="F:UDP-glycosyltransferase activity"/>
    <property type="evidence" value="ECO:0007669"/>
    <property type="project" value="UniProtKB-ARBA"/>
</dbReference>
<dbReference type="FunFam" id="3.90.550.10:FF:000078">
    <property type="entry name" value="glycosyltransferase 8 domain-containing protein 2"/>
    <property type="match status" value="1"/>
</dbReference>
<dbReference type="Gene3D" id="3.90.550.10">
    <property type="entry name" value="Spore Coat Polysaccharide Biosynthesis Protein SpsA, Chain A"/>
    <property type="match status" value="1"/>
</dbReference>
<dbReference type="InterPro" id="IPR002495">
    <property type="entry name" value="Glyco_trans_8"/>
</dbReference>
<dbReference type="InterPro" id="IPR050748">
    <property type="entry name" value="Glycosyltrans_8_dom-fam"/>
</dbReference>
<dbReference type="InterPro" id="IPR029044">
    <property type="entry name" value="Nucleotide-diphossugar_trans"/>
</dbReference>
<dbReference type="PANTHER" id="PTHR13778">
    <property type="entry name" value="GLYCOSYLTRANSFERASE 8 DOMAIN-CONTAINING PROTEIN"/>
    <property type="match status" value="1"/>
</dbReference>
<dbReference type="PANTHER" id="PTHR13778:SF2">
    <property type="entry name" value="GLYCOSYLTRANSFERASE 8 DOMAIN-CONTAINING PROTEIN 2"/>
    <property type="match status" value="1"/>
</dbReference>
<dbReference type="Pfam" id="PF01501">
    <property type="entry name" value="Glyco_transf_8"/>
    <property type="match status" value="1"/>
</dbReference>
<dbReference type="SUPFAM" id="SSF53448">
    <property type="entry name" value="Nucleotide-diphospho-sugar transferases"/>
    <property type="match status" value="1"/>
</dbReference>
<reference key="1">
    <citation type="submission" date="2006-02" db="EMBL/GenBank/DDBJ databases">
        <authorList>
            <consortium name="NIH - Mammalian Gene Collection (MGC) project"/>
        </authorList>
    </citation>
    <scope>NUCLEOTIDE SEQUENCE [LARGE SCALE MRNA]</scope>
    <source>
        <strain>Hereford</strain>
        <tissue>Uterus</tissue>
    </source>
</reference>
<protein>
    <recommendedName>
        <fullName>Glycosyltransferase 8 domain-containing protein 2</fullName>
        <ecNumber>2.4.1.-</ecNumber>
    </recommendedName>
</protein>
<sequence>MALLRKINQVLLFLLIVTLCGILYKKVHKGTMLRNEADDDSETPEEMEDEIPVVICAAAGRMGAAMAAINSIYSNTDANILFYVVGLRNTLSRIRKWIEHSKLREINFKIVEFNPVVLKGKIRPDSSRPELLQPLNFVRFYLPLLIHQHEKVIYLDDDVIVQGDIQELYDTTLALGHAAAFSDDCDLPSSQDIHRLVGLQNTYMGYLDYRKKTIKDLGISPSTCSFNPGVIVANMTEWKHQRITKQLEKWMQKNVEENLYSSSLGGGVATSPMLIVFHGKYSTINPLWHIRHLGWNPDTRYSEHFLQEAKLLHWNGRHKPWDFPSVHNDLWESWFVPDPAGIFKLHHPNS</sequence>
<proteinExistence type="evidence at transcript level"/>
<organism>
    <name type="scientific">Bos taurus</name>
    <name type="common">Bovine</name>
    <dbReference type="NCBI Taxonomy" id="9913"/>
    <lineage>
        <taxon>Eukaryota</taxon>
        <taxon>Metazoa</taxon>
        <taxon>Chordata</taxon>
        <taxon>Craniata</taxon>
        <taxon>Vertebrata</taxon>
        <taxon>Euteleostomi</taxon>
        <taxon>Mammalia</taxon>
        <taxon>Eutheria</taxon>
        <taxon>Laurasiatheria</taxon>
        <taxon>Artiodactyla</taxon>
        <taxon>Ruminantia</taxon>
        <taxon>Pecora</taxon>
        <taxon>Bovidae</taxon>
        <taxon>Bovinae</taxon>
        <taxon>Bos</taxon>
    </lineage>
</organism>
<feature type="chain" id="PRO_0000271381" description="Glycosyltransferase 8 domain-containing protein 2">
    <location>
        <begin position="1"/>
        <end position="350"/>
    </location>
</feature>
<feature type="topological domain" description="Cytoplasmic" evidence="1">
    <location>
        <begin position="1"/>
        <end position="6"/>
    </location>
</feature>
<feature type="transmembrane region" description="Helical; Signal-anchor for type II membrane protein" evidence="1">
    <location>
        <begin position="7"/>
        <end position="24"/>
    </location>
</feature>
<feature type="topological domain" description="Lumenal" evidence="1">
    <location>
        <begin position="25"/>
        <end position="349"/>
    </location>
</feature>
<feature type="glycosylation site" description="N-linked (GlcNAc...) asparagine" evidence="1">
    <location>
        <position position="234"/>
    </location>
</feature>
<keyword id="KW-0325">Glycoprotein</keyword>
<keyword id="KW-0328">Glycosyltransferase</keyword>
<keyword id="KW-0472">Membrane</keyword>
<keyword id="KW-1185">Reference proteome</keyword>
<keyword id="KW-0735">Signal-anchor</keyword>
<keyword id="KW-0808">Transferase</keyword>
<keyword id="KW-0812">Transmembrane</keyword>
<keyword id="KW-1133">Transmembrane helix</keyword>
<gene>
    <name type="primary">GLT8D2</name>
</gene>
<comment type="subcellular location">
    <subcellularLocation>
        <location evidence="2">Membrane</location>
        <topology evidence="2">Single-pass type II membrane protein</topology>
    </subcellularLocation>
</comment>
<comment type="similarity">
    <text evidence="2">Belongs to the glycosyltransferase 8 family.</text>
</comment>
<accession>Q2HJ96</accession>
<evidence type="ECO:0000255" key="1"/>
<evidence type="ECO:0000305" key="2"/>